<comment type="function">
    <text evidence="1">Peptide chain release factor 2 directs the termination of translation in response to the peptide chain termination codons UGA and UAA.</text>
</comment>
<comment type="subcellular location">
    <subcellularLocation>
        <location evidence="1">Cytoplasm</location>
    </subcellularLocation>
</comment>
<comment type="PTM">
    <text evidence="1">Methylated by PrmC. Methylation increases the termination efficiency of RF2.</text>
</comment>
<comment type="similarity">
    <text evidence="1">Belongs to the prokaryotic/mitochondrial release factor family.</text>
</comment>
<accession>Q04GC3</accession>
<name>RF2_OENOB</name>
<protein>
    <recommendedName>
        <fullName evidence="1">Peptide chain release factor 2</fullName>
        <shortName evidence="1">RF-2</shortName>
    </recommendedName>
</protein>
<evidence type="ECO:0000255" key="1">
    <source>
        <dbReference type="HAMAP-Rule" id="MF_00094"/>
    </source>
</evidence>
<dbReference type="EMBL" id="CP000411">
    <property type="protein sequence ID" value="ABJ56499.1"/>
    <property type="molecule type" value="Genomic_DNA"/>
</dbReference>
<dbReference type="RefSeq" id="WP_011677518.1">
    <property type="nucleotide sequence ID" value="NC_008528.1"/>
</dbReference>
<dbReference type="SMR" id="Q04GC3"/>
<dbReference type="STRING" id="203123.OEOE_0554"/>
<dbReference type="KEGG" id="ooe:OEOE_0554"/>
<dbReference type="PATRIC" id="fig|203123.7.peg.562"/>
<dbReference type="eggNOG" id="COG1186">
    <property type="taxonomic scope" value="Bacteria"/>
</dbReference>
<dbReference type="HOGENOM" id="CLU_036856_6_0_9"/>
<dbReference type="Proteomes" id="UP000000774">
    <property type="component" value="Chromosome"/>
</dbReference>
<dbReference type="GO" id="GO:0005737">
    <property type="term" value="C:cytoplasm"/>
    <property type="evidence" value="ECO:0007669"/>
    <property type="project" value="UniProtKB-SubCell"/>
</dbReference>
<dbReference type="GO" id="GO:0016149">
    <property type="term" value="F:translation release factor activity, codon specific"/>
    <property type="evidence" value="ECO:0007669"/>
    <property type="project" value="UniProtKB-UniRule"/>
</dbReference>
<dbReference type="FunFam" id="3.30.160.20:FF:000010">
    <property type="entry name" value="Peptide chain release factor 2"/>
    <property type="match status" value="1"/>
</dbReference>
<dbReference type="Gene3D" id="3.30.160.20">
    <property type="match status" value="1"/>
</dbReference>
<dbReference type="Gene3D" id="3.30.70.1660">
    <property type="match status" value="1"/>
</dbReference>
<dbReference type="Gene3D" id="1.20.58.410">
    <property type="entry name" value="Release factor"/>
    <property type="match status" value="1"/>
</dbReference>
<dbReference type="HAMAP" id="MF_00094">
    <property type="entry name" value="Rel_fac_2"/>
    <property type="match status" value="1"/>
</dbReference>
<dbReference type="InterPro" id="IPR005139">
    <property type="entry name" value="PCRF"/>
</dbReference>
<dbReference type="InterPro" id="IPR000352">
    <property type="entry name" value="Pep_chain_release_fac_I"/>
</dbReference>
<dbReference type="InterPro" id="IPR045853">
    <property type="entry name" value="Pep_chain_release_fac_I_sf"/>
</dbReference>
<dbReference type="InterPro" id="IPR004374">
    <property type="entry name" value="PrfB"/>
</dbReference>
<dbReference type="NCBIfam" id="TIGR00020">
    <property type="entry name" value="prfB"/>
    <property type="match status" value="1"/>
</dbReference>
<dbReference type="PANTHER" id="PTHR43116:SF3">
    <property type="entry name" value="CLASS I PEPTIDE CHAIN RELEASE FACTOR"/>
    <property type="match status" value="1"/>
</dbReference>
<dbReference type="PANTHER" id="PTHR43116">
    <property type="entry name" value="PEPTIDE CHAIN RELEASE FACTOR 2"/>
    <property type="match status" value="1"/>
</dbReference>
<dbReference type="Pfam" id="PF03462">
    <property type="entry name" value="PCRF"/>
    <property type="match status" value="1"/>
</dbReference>
<dbReference type="Pfam" id="PF00472">
    <property type="entry name" value="RF-1"/>
    <property type="match status" value="1"/>
</dbReference>
<dbReference type="SMART" id="SM00937">
    <property type="entry name" value="PCRF"/>
    <property type="match status" value="1"/>
</dbReference>
<dbReference type="SUPFAM" id="SSF75620">
    <property type="entry name" value="Release factor"/>
    <property type="match status" value="1"/>
</dbReference>
<dbReference type="PROSITE" id="PS00745">
    <property type="entry name" value="RF_PROK_I"/>
    <property type="match status" value="1"/>
</dbReference>
<gene>
    <name evidence="1" type="primary">prfB</name>
    <name type="ordered locus">OEOE_0554</name>
</gene>
<organism>
    <name type="scientific">Oenococcus oeni (strain ATCC BAA-331 / PSU-1)</name>
    <dbReference type="NCBI Taxonomy" id="203123"/>
    <lineage>
        <taxon>Bacteria</taxon>
        <taxon>Bacillati</taxon>
        <taxon>Bacillota</taxon>
        <taxon>Bacilli</taxon>
        <taxon>Lactobacillales</taxon>
        <taxon>Lactobacillaceae</taxon>
        <taxon>Oenococcus</taxon>
    </lineage>
</organism>
<proteinExistence type="inferred from homology"/>
<sequence>MELAQARNSISDMQEQIDGFRSTLDLDALDASIAENEDKMSQPGFWDDQQSAQKIIDETNTLKNRRDSFLSLQKSVEDLTAMAELLSEEDDADMHAELDTDIEKTEKDLEKYNLNQLLTEKYDSNNAILEIHPGEGGTESTDWASNLYRMYTRWAQAHDFKVEVTDYQTGDVAGIDSATLRIIGHNAYGFLRSEKGVHRFVRISPFDSAGRRHTSFVSIDVMPELDDDEIEIEIKPQDVKMDVYRSGGAGGQNVNKVSTAVRLTHIPTGIVVASQVERTQYGNRDIAMKMLKAKLYEQEEQKREEEHAKLSGTKLDVAWGSQIRSYVFQPYRMVKDLRSGYETGDTDGVMDGNLDPFINAYLKWKLSQKNPE</sequence>
<keyword id="KW-0963">Cytoplasm</keyword>
<keyword id="KW-0488">Methylation</keyword>
<keyword id="KW-0648">Protein biosynthesis</keyword>
<keyword id="KW-1185">Reference proteome</keyword>
<feature type="chain" id="PRO_1000005007" description="Peptide chain release factor 2">
    <location>
        <begin position="1"/>
        <end position="372"/>
    </location>
</feature>
<feature type="modified residue" description="N5-methylglutamine" evidence="1">
    <location>
        <position position="252"/>
    </location>
</feature>
<reference key="1">
    <citation type="journal article" date="2006" name="Proc. Natl. Acad. Sci. U.S.A.">
        <title>Comparative genomics of the lactic acid bacteria.</title>
        <authorList>
            <person name="Makarova K.S."/>
            <person name="Slesarev A."/>
            <person name="Wolf Y.I."/>
            <person name="Sorokin A."/>
            <person name="Mirkin B."/>
            <person name="Koonin E.V."/>
            <person name="Pavlov A."/>
            <person name="Pavlova N."/>
            <person name="Karamychev V."/>
            <person name="Polouchine N."/>
            <person name="Shakhova V."/>
            <person name="Grigoriev I."/>
            <person name="Lou Y."/>
            <person name="Rohksar D."/>
            <person name="Lucas S."/>
            <person name="Huang K."/>
            <person name="Goodstein D.M."/>
            <person name="Hawkins T."/>
            <person name="Plengvidhya V."/>
            <person name="Welker D."/>
            <person name="Hughes J."/>
            <person name="Goh Y."/>
            <person name="Benson A."/>
            <person name="Baldwin K."/>
            <person name="Lee J.-H."/>
            <person name="Diaz-Muniz I."/>
            <person name="Dosti B."/>
            <person name="Smeianov V."/>
            <person name="Wechter W."/>
            <person name="Barabote R."/>
            <person name="Lorca G."/>
            <person name="Altermann E."/>
            <person name="Barrangou R."/>
            <person name="Ganesan B."/>
            <person name="Xie Y."/>
            <person name="Rawsthorne H."/>
            <person name="Tamir D."/>
            <person name="Parker C."/>
            <person name="Breidt F."/>
            <person name="Broadbent J.R."/>
            <person name="Hutkins R."/>
            <person name="O'Sullivan D."/>
            <person name="Steele J."/>
            <person name="Unlu G."/>
            <person name="Saier M.H. Jr."/>
            <person name="Klaenhammer T."/>
            <person name="Richardson P."/>
            <person name="Kozyavkin S."/>
            <person name="Weimer B.C."/>
            <person name="Mills D.A."/>
        </authorList>
    </citation>
    <scope>NUCLEOTIDE SEQUENCE [LARGE SCALE GENOMIC DNA]</scope>
    <source>
        <strain>ATCC BAA-331 / PSU-1</strain>
    </source>
</reference>